<accession>C0RF11</accession>
<dbReference type="EMBL" id="CP001488">
    <property type="protein sequence ID" value="ACO01483.1"/>
    <property type="molecule type" value="Genomic_DNA"/>
</dbReference>
<dbReference type="RefSeq" id="WP_002964837.1">
    <property type="nucleotide sequence ID" value="NC_012441.1"/>
</dbReference>
<dbReference type="SMR" id="C0RF11"/>
<dbReference type="KEGG" id="bmi:BMEA_A1804"/>
<dbReference type="HOGENOM" id="CLU_158651_3_0_5"/>
<dbReference type="Proteomes" id="UP000001748">
    <property type="component" value="Chromosome I"/>
</dbReference>
<dbReference type="GO" id="GO:0003677">
    <property type="term" value="F:DNA binding"/>
    <property type="evidence" value="ECO:0007669"/>
    <property type="project" value="InterPro"/>
</dbReference>
<dbReference type="HAMAP" id="MF_00797">
    <property type="entry name" value="UPF0335"/>
    <property type="match status" value="1"/>
</dbReference>
<dbReference type="InterPro" id="IPR018753">
    <property type="entry name" value="GapR-like"/>
</dbReference>
<dbReference type="InterPro" id="IPR046367">
    <property type="entry name" value="GapR-like_DNA-bd"/>
</dbReference>
<dbReference type="NCBIfam" id="NF010247">
    <property type="entry name" value="PRK13694.1"/>
    <property type="match status" value="1"/>
</dbReference>
<dbReference type="Pfam" id="PF10073">
    <property type="entry name" value="GapR_DNA-bd"/>
    <property type="match status" value="1"/>
</dbReference>
<protein>
    <recommendedName>
        <fullName evidence="1">UPF0335 protein BMEA_A1804</fullName>
    </recommendedName>
</protein>
<comment type="similarity">
    <text evidence="1">Belongs to the UPF0335 family.</text>
</comment>
<proteinExistence type="inferred from homology"/>
<feature type="chain" id="PRO_1000148521" description="UPF0335 protein BMEA_A1804">
    <location>
        <begin position="1"/>
        <end position="86"/>
    </location>
</feature>
<reference key="1">
    <citation type="submission" date="2009-03" db="EMBL/GenBank/DDBJ databases">
        <title>Brucella melitensis ATCC 23457 whole genome shotgun sequencing project.</title>
        <authorList>
            <person name="Setubal J.C."/>
            <person name="Boyle S."/>
            <person name="Crasta O.R."/>
            <person name="Gillespie J.J."/>
            <person name="Kenyon R.W."/>
            <person name="Lu J."/>
            <person name="Mane S."/>
            <person name="Nagrani S."/>
            <person name="Shallom J.M."/>
            <person name="Shallom S."/>
            <person name="Shukla M."/>
            <person name="Snyder E.E."/>
            <person name="Sobral B.W."/>
            <person name="Wattam A.R."/>
            <person name="Will R."/>
            <person name="Williams K."/>
            <person name="Yoo H."/>
            <person name="Munk C."/>
            <person name="Tapia R."/>
            <person name="Han C."/>
            <person name="Detter J.C."/>
            <person name="Bruce D."/>
            <person name="Brettin T.S."/>
        </authorList>
    </citation>
    <scope>NUCLEOTIDE SEQUENCE [LARGE SCALE GENOMIC DNA]</scope>
    <source>
        <strain>ATCC 23457</strain>
    </source>
</reference>
<name>Y1804_BRUMB</name>
<organism>
    <name type="scientific">Brucella melitensis biotype 2 (strain ATCC 23457)</name>
    <dbReference type="NCBI Taxonomy" id="546272"/>
    <lineage>
        <taxon>Bacteria</taxon>
        <taxon>Pseudomonadati</taxon>
        <taxon>Pseudomonadota</taxon>
        <taxon>Alphaproteobacteria</taxon>
        <taxon>Hyphomicrobiales</taxon>
        <taxon>Brucellaceae</taxon>
        <taxon>Brucella/Ochrobactrum group</taxon>
        <taxon>Brucella</taxon>
    </lineage>
</organism>
<evidence type="ECO:0000255" key="1">
    <source>
        <dbReference type="HAMAP-Rule" id="MF_00797"/>
    </source>
</evidence>
<sequence>MSDDITSEAQTIAVGQLRAFIERIERLEEEKKTIGDDIKEVYAELKGSGFDSKVVRTIIRLRKKEDHERQEEEAMLQLYMDALGMS</sequence>
<gene>
    <name type="ordered locus">BMEA_A1804</name>
</gene>